<comment type="function">
    <text evidence="2">Converts testosterone (T) into 5-alpha-dihydrotestosterone (DHT) and progesterone or corticosterone into their corresponding 5-alpha-3-oxosteroids. It plays a central role in sexual differentiation and androgen physiology.</text>
</comment>
<comment type="catalytic activity">
    <reaction evidence="2">
        <text>a 3-oxo-5alpha-steroid + NADP(+) = a 3-oxo-Delta(4)-steroid + NADPH + H(+)</text>
        <dbReference type="Rhea" id="RHEA:54384"/>
        <dbReference type="ChEBI" id="CHEBI:13601"/>
        <dbReference type="ChEBI" id="CHEBI:15378"/>
        <dbReference type="ChEBI" id="CHEBI:47909"/>
        <dbReference type="ChEBI" id="CHEBI:57783"/>
        <dbReference type="ChEBI" id="CHEBI:58349"/>
        <dbReference type="EC" id="1.3.1.22"/>
    </reaction>
</comment>
<comment type="catalytic activity">
    <reaction evidence="2">
        <text>17beta-hydroxy-5alpha-androstan-3-one + NADP(+) = testosterone + NADPH + H(+)</text>
        <dbReference type="Rhea" id="RHEA:50820"/>
        <dbReference type="ChEBI" id="CHEBI:15378"/>
        <dbReference type="ChEBI" id="CHEBI:16330"/>
        <dbReference type="ChEBI" id="CHEBI:17347"/>
        <dbReference type="ChEBI" id="CHEBI:57783"/>
        <dbReference type="ChEBI" id="CHEBI:58349"/>
        <dbReference type="EC" id="1.3.1.22"/>
    </reaction>
    <physiologicalReaction direction="right-to-left" evidence="2">
        <dbReference type="Rhea" id="RHEA:50822"/>
    </physiologicalReaction>
</comment>
<comment type="catalytic activity">
    <reaction evidence="2">
        <text>5alpha-pregnane-3,20-dione + NADP(+) = progesterone + NADPH + H(+)</text>
        <dbReference type="Rhea" id="RHEA:21952"/>
        <dbReference type="ChEBI" id="CHEBI:15378"/>
        <dbReference type="ChEBI" id="CHEBI:17026"/>
        <dbReference type="ChEBI" id="CHEBI:28952"/>
        <dbReference type="ChEBI" id="CHEBI:57783"/>
        <dbReference type="ChEBI" id="CHEBI:58349"/>
        <dbReference type="EC" id="1.3.1.22"/>
    </reaction>
    <physiologicalReaction direction="right-to-left" evidence="2">
        <dbReference type="Rhea" id="RHEA:21954"/>
    </physiologicalReaction>
</comment>
<comment type="subcellular location">
    <subcellularLocation>
        <location evidence="1">Microsome membrane</location>
        <topology evidence="1">Multi-pass membrane protein</topology>
    </subcellularLocation>
    <subcellularLocation>
        <location evidence="4">Endoplasmic reticulum membrane</location>
        <topology evidence="4">Multi-pass membrane protein</topology>
    </subcellularLocation>
</comment>
<comment type="similarity">
    <text evidence="4">Belongs to the steroid 5-alpha reductase family.</text>
</comment>
<reference key="1">
    <citation type="journal article" date="2002" name="Nucleic Acids Res.">
        <title>Transcriptional regulation of the mouse steroid 5alpha-reductase type II gene by progesterone in brain.</title>
        <authorList>
            <person name="Takeyama K."/>
            <person name="Kato S."/>
        </authorList>
    </citation>
    <scope>NUCLEOTIDE SEQUENCE [MRNA]</scope>
    <source>
        <tissue>Kidney</tissue>
    </source>
</reference>
<reference key="2">
    <citation type="journal article" date="2005" name="Science">
        <title>The transcriptional landscape of the mammalian genome.</title>
        <authorList>
            <person name="Carninci P."/>
            <person name="Kasukawa T."/>
            <person name="Katayama S."/>
            <person name="Gough J."/>
            <person name="Frith M.C."/>
            <person name="Maeda N."/>
            <person name="Oyama R."/>
            <person name="Ravasi T."/>
            <person name="Lenhard B."/>
            <person name="Wells C."/>
            <person name="Kodzius R."/>
            <person name="Shimokawa K."/>
            <person name="Bajic V.B."/>
            <person name="Brenner S.E."/>
            <person name="Batalov S."/>
            <person name="Forrest A.R."/>
            <person name="Zavolan M."/>
            <person name="Davis M.J."/>
            <person name="Wilming L.G."/>
            <person name="Aidinis V."/>
            <person name="Allen J.E."/>
            <person name="Ambesi-Impiombato A."/>
            <person name="Apweiler R."/>
            <person name="Aturaliya R.N."/>
            <person name="Bailey T.L."/>
            <person name="Bansal M."/>
            <person name="Baxter L."/>
            <person name="Beisel K.W."/>
            <person name="Bersano T."/>
            <person name="Bono H."/>
            <person name="Chalk A.M."/>
            <person name="Chiu K.P."/>
            <person name="Choudhary V."/>
            <person name="Christoffels A."/>
            <person name="Clutterbuck D.R."/>
            <person name="Crowe M.L."/>
            <person name="Dalla E."/>
            <person name="Dalrymple B.P."/>
            <person name="de Bono B."/>
            <person name="Della Gatta G."/>
            <person name="di Bernardo D."/>
            <person name="Down T."/>
            <person name="Engstrom P."/>
            <person name="Fagiolini M."/>
            <person name="Faulkner G."/>
            <person name="Fletcher C.F."/>
            <person name="Fukushima T."/>
            <person name="Furuno M."/>
            <person name="Futaki S."/>
            <person name="Gariboldi M."/>
            <person name="Georgii-Hemming P."/>
            <person name="Gingeras T.R."/>
            <person name="Gojobori T."/>
            <person name="Green R.E."/>
            <person name="Gustincich S."/>
            <person name="Harbers M."/>
            <person name="Hayashi Y."/>
            <person name="Hensch T.K."/>
            <person name="Hirokawa N."/>
            <person name="Hill D."/>
            <person name="Huminiecki L."/>
            <person name="Iacono M."/>
            <person name="Ikeo K."/>
            <person name="Iwama A."/>
            <person name="Ishikawa T."/>
            <person name="Jakt M."/>
            <person name="Kanapin A."/>
            <person name="Katoh M."/>
            <person name="Kawasawa Y."/>
            <person name="Kelso J."/>
            <person name="Kitamura H."/>
            <person name="Kitano H."/>
            <person name="Kollias G."/>
            <person name="Krishnan S.P."/>
            <person name="Kruger A."/>
            <person name="Kummerfeld S.K."/>
            <person name="Kurochkin I.V."/>
            <person name="Lareau L.F."/>
            <person name="Lazarevic D."/>
            <person name="Lipovich L."/>
            <person name="Liu J."/>
            <person name="Liuni S."/>
            <person name="McWilliam S."/>
            <person name="Madan Babu M."/>
            <person name="Madera M."/>
            <person name="Marchionni L."/>
            <person name="Matsuda H."/>
            <person name="Matsuzawa S."/>
            <person name="Miki H."/>
            <person name="Mignone F."/>
            <person name="Miyake S."/>
            <person name="Morris K."/>
            <person name="Mottagui-Tabar S."/>
            <person name="Mulder N."/>
            <person name="Nakano N."/>
            <person name="Nakauchi H."/>
            <person name="Ng P."/>
            <person name="Nilsson R."/>
            <person name="Nishiguchi S."/>
            <person name="Nishikawa S."/>
            <person name="Nori F."/>
            <person name="Ohara O."/>
            <person name="Okazaki Y."/>
            <person name="Orlando V."/>
            <person name="Pang K.C."/>
            <person name="Pavan W.J."/>
            <person name="Pavesi G."/>
            <person name="Pesole G."/>
            <person name="Petrovsky N."/>
            <person name="Piazza S."/>
            <person name="Reed J."/>
            <person name="Reid J.F."/>
            <person name="Ring B.Z."/>
            <person name="Ringwald M."/>
            <person name="Rost B."/>
            <person name="Ruan Y."/>
            <person name="Salzberg S.L."/>
            <person name="Sandelin A."/>
            <person name="Schneider C."/>
            <person name="Schoenbach C."/>
            <person name="Sekiguchi K."/>
            <person name="Semple C.A."/>
            <person name="Seno S."/>
            <person name="Sessa L."/>
            <person name="Sheng Y."/>
            <person name="Shibata Y."/>
            <person name="Shimada H."/>
            <person name="Shimada K."/>
            <person name="Silva D."/>
            <person name="Sinclair B."/>
            <person name="Sperling S."/>
            <person name="Stupka E."/>
            <person name="Sugiura K."/>
            <person name="Sultana R."/>
            <person name="Takenaka Y."/>
            <person name="Taki K."/>
            <person name="Tammoja K."/>
            <person name="Tan S.L."/>
            <person name="Tang S."/>
            <person name="Taylor M.S."/>
            <person name="Tegner J."/>
            <person name="Teichmann S.A."/>
            <person name="Ueda H.R."/>
            <person name="van Nimwegen E."/>
            <person name="Verardo R."/>
            <person name="Wei C.L."/>
            <person name="Yagi K."/>
            <person name="Yamanishi H."/>
            <person name="Zabarovsky E."/>
            <person name="Zhu S."/>
            <person name="Zimmer A."/>
            <person name="Hide W."/>
            <person name="Bult C."/>
            <person name="Grimmond S.M."/>
            <person name="Teasdale R.D."/>
            <person name="Liu E.T."/>
            <person name="Brusic V."/>
            <person name="Quackenbush J."/>
            <person name="Wahlestedt C."/>
            <person name="Mattick J.S."/>
            <person name="Hume D.A."/>
            <person name="Kai C."/>
            <person name="Sasaki D."/>
            <person name="Tomaru Y."/>
            <person name="Fukuda S."/>
            <person name="Kanamori-Katayama M."/>
            <person name="Suzuki M."/>
            <person name="Aoki J."/>
            <person name="Arakawa T."/>
            <person name="Iida J."/>
            <person name="Imamura K."/>
            <person name="Itoh M."/>
            <person name="Kato T."/>
            <person name="Kawaji H."/>
            <person name="Kawagashira N."/>
            <person name="Kawashima T."/>
            <person name="Kojima M."/>
            <person name="Kondo S."/>
            <person name="Konno H."/>
            <person name="Nakano K."/>
            <person name="Ninomiya N."/>
            <person name="Nishio T."/>
            <person name="Okada M."/>
            <person name="Plessy C."/>
            <person name="Shibata K."/>
            <person name="Shiraki T."/>
            <person name="Suzuki S."/>
            <person name="Tagami M."/>
            <person name="Waki K."/>
            <person name="Watahiki A."/>
            <person name="Okamura-Oho Y."/>
            <person name="Suzuki H."/>
            <person name="Kawai J."/>
            <person name="Hayashizaki Y."/>
        </authorList>
    </citation>
    <scope>NUCLEOTIDE SEQUENCE [LARGE SCALE MRNA]</scope>
    <source>
        <strain>C57BL/6J</strain>
        <tissue>Aorta</tissue>
        <tissue>Vein</tissue>
    </source>
</reference>
<reference key="3">
    <citation type="journal article" date="2004" name="Genome Res.">
        <title>The status, quality, and expansion of the NIH full-length cDNA project: the Mammalian Gene Collection (MGC).</title>
        <authorList>
            <consortium name="The MGC Project Team"/>
        </authorList>
    </citation>
    <scope>NUCLEOTIDE SEQUENCE [LARGE SCALE MRNA]</scope>
    <source>
        <tissue>Brain</tissue>
    </source>
</reference>
<feature type="chain" id="PRO_0000213678" description="3-oxo-5-alpha-steroid 4-dehydrogenase 2">
    <location>
        <begin position="1"/>
        <end position="254"/>
    </location>
</feature>
<feature type="transmembrane region" description="Helical" evidence="3">
    <location>
        <begin position="8"/>
        <end position="28"/>
    </location>
</feature>
<feature type="transmembrane region" description="Helical" evidence="3">
    <location>
        <begin position="72"/>
        <end position="92"/>
    </location>
</feature>
<feature type="transmembrane region" description="Helical" evidence="3">
    <location>
        <begin position="146"/>
        <end position="166"/>
    </location>
</feature>
<feature type="transmembrane region" description="Helical" evidence="3">
    <location>
        <begin position="206"/>
        <end position="226"/>
    </location>
</feature>
<evidence type="ECO:0000250" key="1"/>
<evidence type="ECO:0000250" key="2">
    <source>
        <dbReference type="UniProtKB" id="P31213"/>
    </source>
</evidence>
<evidence type="ECO:0000255" key="3"/>
<evidence type="ECO:0000305" key="4"/>
<dbReference type="EC" id="1.3.1.22" evidence="2"/>
<dbReference type="EMBL" id="AB049456">
    <property type="protein sequence ID" value="BAB40179.1"/>
    <property type="molecule type" value="mRNA"/>
</dbReference>
<dbReference type="EMBL" id="AK138946">
    <property type="protein sequence ID" value="BAE23830.1"/>
    <property type="molecule type" value="mRNA"/>
</dbReference>
<dbReference type="EMBL" id="BC125510">
    <property type="protein sequence ID" value="AAI25511.1"/>
    <property type="molecule type" value="mRNA"/>
</dbReference>
<dbReference type="CCDS" id="CCDS28968.1"/>
<dbReference type="RefSeq" id="NP_444418.1">
    <property type="nucleotide sequence ID" value="NM_053188.3"/>
</dbReference>
<dbReference type="SMR" id="Q99N99"/>
<dbReference type="FunCoup" id="Q99N99">
    <property type="interactions" value="100"/>
</dbReference>
<dbReference type="STRING" id="10090.ENSMUSP00000048862"/>
<dbReference type="PhosphoSitePlus" id="Q99N99"/>
<dbReference type="PaxDb" id="10090-ENSMUSP00000048862"/>
<dbReference type="ProteomicsDB" id="256828"/>
<dbReference type="Antibodypedia" id="72759">
    <property type="antibodies" value="218 antibodies from 26 providers"/>
</dbReference>
<dbReference type="DNASU" id="94224"/>
<dbReference type="Ensembl" id="ENSMUST00000043458.9">
    <property type="protein sequence ID" value="ENSMUSP00000048862.8"/>
    <property type="gene ID" value="ENSMUSG00000038541.9"/>
</dbReference>
<dbReference type="GeneID" id="94224"/>
<dbReference type="KEGG" id="mmu:94224"/>
<dbReference type="UCSC" id="uc008dnt.1">
    <property type="organism name" value="mouse"/>
</dbReference>
<dbReference type="AGR" id="MGI:2150380"/>
<dbReference type="CTD" id="6716"/>
<dbReference type="MGI" id="MGI:2150380">
    <property type="gene designation" value="Srd5a2"/>
</dbReference>
<dbReference type="VEuPathDB" id="HostDB:ENSMUSG00000038541"/>
<dbReference type="eggNOG" id="KOG1638">
    <property type="taxonomic scope" value="Eukaryota"/>
</dbReference>
<dbReference type="GeneTree" id="ENSGT00950000182886"/>
<dbReference type="HOGENOM" id="CLU_065395_1_1_1"/>
<dbReference type="InParanoid" id="Q99N99"/>
<dbReference type="OMA" id="PEEWYTD"/>
<dbReference type="OrthoDB" id="5788137at2759"/>
<dbReference type="PhylomeDB" id="Q99N99"/>
<dbReference type="TreeFam" id="TF314668"/>
<dbReference type="Reactome" id="R-MMU-193048">
    <property type="pathway name" value="Androgen biosynthesis"/>
</dbReference>
<dbReference type="BioGRID-ORCS" id="94224">
    <property type="hits" value="4 hits in 81 CRISPR screens"/>
</dbReference>
<dbReference type="PRO" id="PR:Q99N99"/>
<dbReference type="Proteomes" id="UP000000589">
    <property type="component" value="Chromosome 17"/>
</dbReference>
<dbReference type="RNAct" id="Q99N99">
    <property type="molecule type" value="protein"/>
</dbReference>
<dbReference type="Bgee" id="ENSMUSG00000038541">
    <property type="expression patterns" value="Expressed in adrenal gland and 45 other cell types or tissues"/>
</dbReference>
<dbReference type="GO" id="GO:0070852">
    <property type="term" value="C:cell body fiber"/>
    <property type="evidence" value="ECO:0007669"/>
    <property type="project" value="Ensembl"/>
</dbReference>
<dbReference type="GO" id="GO:0005783">
    <property type="term" value="C:endoplasmic reticulum"/>
    <property type="evidence" value="ECO:0000266"/>
    <property type="project" value="MGI"/>
</dbReference>
<dbReference type="GO" id="GO:0005789">
    <property type="term" value="C:endoplasmic reticulum membrane"/>
    <property type="evidence" value="ECO:0000266"/>
    <property type="project" value="MGI"/>
</dbReference>
<dbReference type="GO" id="GO:0043025">
    <property type="term" value="C:neuronal cell body"/>
    <property type="evidence" value="ECO:0007669"/>
    <property type="project" value="Ensembl"/>
</dbReference>
<dbReference type="GO" id="GO:0047751">
    <property type="term" value="F:3-oxo-5-alpha-steroid 4-dehydrogenase (NADP+) activity"/>
    <property type="evidence" value="ECO:0007669"/>
    <property type="project" value="UniProtKB-EC"/>
</dbReference>
<dbReference type="GO" id="GO:0003865">
    <property type="term" value="F:3-oxo-5-alpha-steroid 4-dehydrogenase activity"/>
    <property type="evidence" value="ECO:0000315"/>
    <property type="project" value="MGI"/>
</dbReference>
<dbReference type="GO" id="GO:0033218">
    <property type="term" value="F:amide binding"/>
    <property type="evidence" value="ECO:0007669"/>
    <property type="project" value="Ensembl"/>
</dbReference>
<dbReference type="GO" id="GO:0030283">
    <property type="term" value="F:testosterone dehydrogenase [NAD(P)+] activity"/>
    <property type="evidence" value="ECO:0000250"/>
    <property type="project" value="UniProtKB"/>
</dbReference>
<dbReference type="GO" id="GO:0006702">
    <property type="term" value="P:androgen biosynthetic process"/>
    <property type="evidence" value="ECO:0000315"/>
    <property type="project" value="MGI"/>
</dbReference>
<dbReference type="GO" id="GO:0018879">
    <property type="term" value="P:biphenyl metabolic process"/>
    <property type="evidence" value="ECO:0007669"/>
    <property type="project" value="Ensembl"/>
</dbReference>
<dbReference type="GO" id="GO:0060348">
    <property type="term" value="P:bone development"/>
    <property type="evidence" value="ECO:0007669"/>
    <property type="project" value="Ensembl"/>
</dbReference>
<dbReference type="GO" id="GO:0030154">
    <property type="term" value="P:cell differentiation"/>
    <property type="evidence" value="ECO:0007669"/>
    <property type="project" value="UniProtKB-KW"/>
</dbReference>
<dbReference type="GO" id="GO:0018894">
    <property type="term" value="P:dibenzo-p-dioxin metabolic process"/>
    <property type="evidence" value="ECO:0007669"/>
    <property type="project" value="Ensembl"/>
</dbReference>
<dbReference type="GO" id="GO:0030540">
    <property type="term" value="P:female genitalia development"/>
    <property type="evidence" value="ECO:0007669"/>
    <property type="project" value="Ensembl"/>
</dbReference>
<dbReference type="GO" id="GO:0021766">
    <property type="term" value="P:hippocampus development"/>
    <property type="evidence" value="ECO:0007669"/>
    <property type="project" value="Ensembl"/>
</dbReference>
<dbReference type="GO" id="GO:0021854">
    <property type="term" value="P:hypothalamus development"/>
    <property type="evidence" value="ECO:0007669"/>
    <property type="project" value="Ensembl"/>
</dbReference>
<dbReference type="GO" id="GO:0030539">
    <property type="term" value="P:male genitalia development"/>
    <property type="evidence" value="ECO:0000315"/>
    <property type="project" value="MGI"/>
</dbReference>
<dbReference type="GO" id="GO:0008584">
    <property type="term" value="P:male gonad development"/>
    <property type="evidence" value="ECO:0007669"/>
    <property type="project" value="Ensembl"/>
</dbReference>
<dbReference type="GO" id="GO:0018963">
    <property type="term" value="P:phthalate metabolic process"/>
    <property type="evidence" value="ECO:0007669"/>
    <property type="project" value="Ensembl"/>
</dbReference>
<dbReference type="GO" id="GO:1904614">
    <property type="term" value="P:response to biphenyl"/>
    <property type="evidence" value="ECO:0007669"/>
    <property type="project" value="Ensembl"/>
</dbReference>
<dbReference type="GO" id="GO:0032354">
    <property type="term" value="P:response to follicle-stimulating hormone"/>
    <property type="evidence" value="ECO:0007669"/>
    <property type="project" value="Ensembl"/>
</dbReference>
<dbReference type="GO" id="GO:0031667">
    <property type="term" value="P:response to nutrient levels"/>
    <property type="evidence" value="ECO:0007669"/>
    <property type="project" value="Ensembl"/>
</dbReference>
<dbReference type="GO" id="GO:0043434">
    <property type="term" value="P:response to peptide hormone"/>
    <property type="evidence" value="ECO:0007669"/>
    <property type="project" value="Ensembl"/>
</dbReference>
<dbReference type="GO" id="GO:0048545">
    <property type="term" value="P:response to steroid hormone"/>
    <property type="evidence" value="ECO:0007669"/>
    <property type="project" value="Ensembl"/>
</dbReference>
<dbReference type="GO" id="GO:0033574">
    <property type="term" value="P:response to testosterone"/>
    <property type="evidence" value="ECO:0007669"/>
    <property type="project" value="Ensembl"/>
</dbReference>
<dbReference type="GO" id="GO:0009410">
    <property type="term" value="P:response to xenobiotic stimulus"/>
    <property type="evidence" value="ECO:0007669"/>
    <property type="project" value="Ensembl"/>
</dbReference>
<dbReference type="GO" id="GO:0006694">
    <property type="term" value="P:steroid biosynthetic process"/>
    <property type="evidence" value="ECO:0000315"/>
    <property type="project" value="MGI"/>
</dbReference>
<dbReference type="GO" id="GO:0006706">
    <property type="term" value="P:steroid catabolic process"/>
    <property type="evidence" value="ECO:0007669"/>
    <property type="project" value="Ensembl"/>
</dbReference>
<dbReference type="GO" id="GO:0061370">
    <property type="term" value="P:testosterone biosynthetic process"/>
    <property type="evidence" value="ECO:0000250"/>
    <property type="project" value="UniProtKB"/>
</dbReference>
<dbReference type="FunFam" id="1.20.120.1630:FF:000002">
    <property type="entry name" value="Steroid 5 alpha-reductase 1"/>
    <property type="match status" value="1"/>
</dbReference>
<dbReference type="Gene3D" id="1.20.120.1630">
    <property type="match status" value="1"/>
</dbReference>
<dbReference type="InterPro" id="IPR016636">
    <property type="entry name" value="3-oxo-5-alpha-steroid_4-DH"/>
</dbReference>
<dbReference type="InterPro" id="IPR001104">
    <property type="entry name" value="3-oxo-5_a-steroid_4-DH_C"/>
</dbReference>
<dbReference type="InterPro" id="IPR039357">
    <property type="entry name" value="SRD5A/TECR"/>
</dbReference>
<dbReference type="PANTHER" id="PTHR10556">
    <property type="entry name" value="3-OXO-5-ALPHA-STEROID 4-DEHYDROGENASE"/>
    <property type="match status" value="1"/>
</dbReference>
<dbReference type="PANTHER" id="PTHR10556:SF37">
    <property type="entry name" value="3-OXO-5-ALPHA-STEROID 4-DEHYDROGENASE 2"/>
    <property type="match status" value="1"/>
</dbReference>
<dbReference type="Pfam" id="PF02544">
    <property type="entry name" value="Steroid_dh"/>
    <property type="match status" value="1"/>
</dbReference>
<dbReference type="PIRSF" id="PIRSF015596">
    <property type="entry name" value="5_alpha-SR2"/>
    <property type="match status" value="1"/>
</dbReference>
<dbReference type="PROSITE" id="PS50244">
    <property type="entry name" value="S5A_REDUCTASE"/>
    <property type="match status" value="1"/>
</dbReference>
<gene>
    <name type="primary">Srd5a2</name>
    <name type="synonym">5art2</name>
</gene>
<name>S5A2_MOUSE</name>
<organism>
    <name type="scientific">Mus musculus</name>
    <name type="common">Mouse</name>
    <dbReference type="NCBI Taxonomy" id="10090"/>
    <lineage>
        <taxon>Eukaryota</taxon>
        <taxon>Metazoa</taxon>
        <taxon>Chordata</taxon>
        <taxon>Craniata</taxon>
        <taxon>Vertebrata</taxon>
        <taxon>Euteleostomi</taxon>
        <taxon>Mammalia</taxon>
        <taxon>Eutheria</taxon>
        <taxon>Euarchontoglires</taxon>
        <taxon>Glires</taxon>
        <taxon>Rodentia</taxon>
        <taxon>Myomorpha</taxon>
        <taxon>Muroidea</taxon>
        <taxon>Muridae</taxon>
        <taxon>Murinae</taxon>
        <taxon>Mus</taxon>
        <taxon>Mus</taxon>
    </lineage>
</organism>
<keyword id="KW-0221">Differentiation</keyword>
<keyword id="KW-0256">Endoplasmic reticulum</keyword>
<keyword id="KW-0443">Lipid metabolism</keyword>
<keyword id="KW-0472">Membrane</keyword>
<keyword id="KW-0492">Microsome</keyword>
<keyword id="KW-0521">NADP</keyword>
<keyword id="KW-0560">Oxidoreductase</keyword>
<keyword id="KW-1185">Reference proteome</keyword>
<keyword id="KW-0726">Sexual differentiation</keyword>
<keyword id="KW-0812">Transmembrane</keyword>
<keyword id="KW-1133">Transmembrane helix</keyword>
<sequence length="254" mass="28619">MPIVCHQVPVLAGSATLATMGTLILCFGKPASYGKHSESVSSGVPLLPARIAWFLQELPSFVVSVGMLAWQPRSLFGPPGNVLLGLFSAHYFHRTFIYSLLTRGRPLSAVIFLKATAFCIGNGLLQAYYLVYCAEYPEEWYTDMRFSVGVFFFILGMGINIHSDCMLRQLRKPGEVIYRIPQGGLFTYVSGANFLGEIIEWMGYALATWSVPAFAFAFFTLCFLGMQAFYHHRFYLKMFKDYPKSRKALIPFIF</sequence>
<proteinExistence type="evidence at transcript level"/>
<protein>
    <recommendedName>
        <fullName>3-oxo-5-alpha-steroid 4-dehydrogenase 2</fullName>
        <ecNumber evidence="2">1.3.1.22</ecNumber>
    </recommendedName>
    <alternativeName>
        <fullName>5 alpha-SR2</fullName>
    </alternativeName>
    <alternativeName>
        <fullName>SR type 2</fullName>
    </alternativeName>
    <alternativeName>
        <fullName>Steroid 5-alpha-reductase 2</fullName>
        <shortName>S5AR 2</shortName>
    </alternativeName>
</protein>
<accession>Q99N99</accession>
<accession>Q3UTZ9</accession>